<feature type="chain" id="PRO_0000457275" description="Cis-3-hydroxy-L-proline dehydratase">
    <location>
        <begin position="1"/>
        <end position="580"/>
    </location>
</feature>
<feature type="active site" description="Proton acceptor" evidence="5">
    <location>
        <position position="66"/>
    </location>
</feature>
<feature type="mutagenesis site" description="No effect on catalytic activity." evidence="2">
    <original>D</original>
    <variation>A</variation>
    <location>
        <position position="35"/>
    </location>
</feature>
<feature type="mutagenesis site" description="Loss of catalytic activity." evidence="2">
    <original>S</original>
    <variation>A</variation>
    <location>
        <position position="66"/>
    </location>
</feature>
<feature type="mutagenesis site" description="Significantly decreased catalytic activity." evidence="2">
    <original>C</original>
    <variation>A</variation>
    <location>
        <position position="67"/>
    </location>
</feature>
<feature type="mutagenesis site" description="Loss of catalytic activity." evidence="2">
    <original>S</original>
    <variation>A</variation>
    <location>
        <position position="70"/>
    </location>
</feature>
<feature type="mutagenesis site" description="No effect on catalytic activity. Contains iron." evidence="2">
    <original>C</original>
    <variation>A</variation>
    <location>
        <position position="207"/>
    </location>
</feature>
<feature type="mutagenesis site" description="Loss of catalytic activity. Loss of iron." evidence="2">
    <original>E</original>
    <variation>A</variation>
    <location>
        <position position="294"/>
    </location>
</feature>
<feature type="mutagenesis site" description="Loss of catalytic activity." evidence="2">
    <original>S</original>
    <variation>A</variation>
    <location>
        <position position="295"/>
    </location>
</feature>
<feature type="mutagenesis site" description="Loss of catalytic activity." evidence="2">
    <original>S</original>
    <variation>A</variation>
    <location>
        <position position="303"/>
    </location>
</feature>
<feature type="mutagenesis site" description="Loss of catalytic activity." evidence="2">
    <original>T</original>
    <variation>A</variation>
    <location>
        <position position="309"/>
    </location>
</feature>
<feature type="mutagenesis site" description="About half of the catalytic activity of the wild-type. Contains iron." evidence="2">
    <original>N</original>
    <variation>A</variation>
    <location>
        <position position="457"/>
    </location>
</feature>
<feature type="mutagenesis site" description="Significantly decreased catalytic activity." evidence="2">
    <original>H</original>
    <variation>A</variation>
    <location>
        <position position="459"/>
    </location>
</feature>
<feature type="mutagenesis site" description="Significantly decreased catalytic activity." evidence="2">
    <original>D</original>
    <variation>A</variation>
    <location>
        <position position="514"/>
    </location>
</feature>
<feature type="mutagenesis site" description="Loss of catalytic activity. Contains iron." evidence="2">
    <original>C</original>
    <variation>A</variation>
    <location>
        <position position="518"/>
    </location>
</feature>
<feature type="mutagenesis site" description="Significantly decreased catalytic activity." evidence="2">
    <original>S</original>
    <variation>A</variation>
    <location>
        <position position="536"/>
    </location>
</feature>
<feature type="mutagenesis site" description="Loss of catalytic activity." evidence="2">
    <original>K</original>
    <variation>A</variation>
    <location>
        <position position="538"/>
    </location>
</feature>
<comment type="function">
    <text evidence="2">Catalyzes the dehydration of cis-3-hydroxy-L-proline (c3LHyp) to Delta(1)-pyrroline-2-carboxylate (Pyr2C). Also has activity with (2S,3S,4R)-3,4-dihydroxyproline as substrate, albeit at about 300-fold lower rate. No activity with L-proline, trans-4-hydroxy-L-proline (t4LHyp), cis-4-hydroxy-L-proline (c4LHyp), trans-3-hydroxy-L-proline (t3LHyp), D-proline, cis-4-hydroxy-D-proline (c4DHyp), trans-4-hydroxy-D-proline (t4DHyp) or L-serine as substrates. No hydro-lyase activity with citrate or cis-acotinate. Does not catalyze 2-epimerization of c3LHyp to trans-3-hydroxy-D-proline (t3DHyp). Involved in a degradation pathway that converts c3LHyp to L-proline, which would allow P.aeruginosa to grow on c3LHyp as a sole carbon source.</text>
</comment>
<comment type="catalytic activity">
    <reaction evidence="2">
        <text>cis-3-hydroxy-L-proline = 1-pyrroline-2-carboxylate + H2O</text>
        <dbReference type="Rhea" id="RHEA:47624"/>
        <dbReference type="ChEBI" id="CHEBI:15377"/>
        <dbReference type="ChEBI" id="CHEBI:39785"/>
        <dbReference type="ChEBI" id="CHEBI:60041"/>
        <dbReference type="EC" id="4.2.1.171"/>
    </reaction>
    <physiologicalReaction direction="left-to-right" evidence="2">
        <dbReference type="Rhea" id="RHEA:47625"/>
    </physiologicalReaction>
</comment>
<comment type="cofactor">
    <cofactor evidence="1">
        <name>Fe(3+)</name>
        <dbReference type="ChEBI" id="CHEBI:29034"/>
    </cofactor>
</comment>
<comment type="activity regulation">
    <text evidence="2">Inhibited by Zn(2+), Cd(2+) and Hg(2+), but not by Co(2+), Ni(2+), Mn(2+), Sr(2+), Mg(2+), or Fe(3+). Inhibited by pyrrole-2-carboxylate and its derivative 2-thiophenecarboxylate, but not by trans-aconitate, fluorocitrate and oxalomalate, which are typical inhibitors of the aconitase enzymes.</text>
</comment>
<comment type="biophysicochemical properties">
    <kinetics>
        <KM evidence="2">0.387 mM for cis-3-hydroxy-L-proline (at pH 8.0)</KM>
        <Vmax evidence="2">41.3 umol/min/mg enzyme</Vmax>
        <text evidence="2">kcat is 2820 min(-1). kcat/KM is 7330 min(-1) mM(-1).</text>
    </kinetics>
    <phDependence>
        <text evidence="2">Optimum pH is 8-9.5.</text>
    </phDependence>
    <temperatureDependence>
        <text evidence="2">No loss of activity after three months at minus 35 degrees Celsius.</text>
    </temperatureDependence>
</comment>
<comment type="subunit">
    <text evidence="2">Monomer.</text>
</comment>
<comment type="induction">
    <text evidence="2">Expression is induced when the bacterium is grown on trans-4-hydroxy-L-proline (t4LHyp), and to a lesser extent when grown on cis-3-hydroxy-L-proline (c3LHyp) and cis-4-hydroxy-D-proline (c4DHyp) as sole carbon source. Expression is up-regulated by c3LHyp, and by several isomeric 3- and 4-hydroxyprolines.</text>
</comment>
<comment type="similarity">
    <text evidence="4">Belongs to the AcnX family.</text>
</comment>
<protein>
    <recommendedName>
        <fullName evidence="3">Cis-3-hydroxy-L-proline dehydratase</fullName>
        <shortName evidence="4">c3LHyp dehydratase</shortName>
        <shortName evidence="4">c3LHypD</shortName>
        <ecNumber evidence="2">4.2.1.171</ecNumber>
    </recommendedName>
    <alternativeName>
        <fullName evidence="3">Aconitase X</fullName>
        <shortName evidence="3">AcnX</shortName>
    </alternativeName>
    <alternativeName>
        <fullName evidence="3">PaLhpI</fullName>
    </alternativeName>
</protein>
<proteinExistence type="evidence at protein level"/>
<dbReference type="EC" id="4.2.1.171" evidence="2"/>
<dbReference type="EMBL" id="AE004091">
    <property type="protein sequence ID" value="AAG04648.1"/>
    <property type="molecule type" value="Genomic_DNA"/>
</dbReference>
<dbReference type="PIR" id="A83489">
    <property type="entry name" value="A83489"/>
</dbReference>
<dbReference type="RefSeq" id="NP_249950.1">
    <property type="nucleotide sequence ID" value="NC_002516.2"/>
</dbReference>
<dbReference type="RefSeq" id="WP_003114962.1">
    <property type="nucleotide sequence ID" value="NZ_QZGE01000005.1"/>
</dbReference>
<dbReference type="SMR" id="Q9I485"/>
<dbReference type="STRING" id="208964.PA1259"/>
<dbReference type="PaxDb" id="208964-PA1259"/>
<dbReference type="PRIDE" id="Q9I485"/>
<dbReference type="GeneID" id="881330"/>
<dbReference type="KEGG" id="pae:PA1259"/>
<dbReference type="PATRIC" id="fig|208964.12.peg.1307"/>
<dbReference type="PseudoCAP" id="PA1259"/>
<dbReference type="HOGENOM" id="CLU_018825_2_0_6"/>
<dbReference type="InParanoid" id="Q9I485"/>
<dbReference type="OrthoDB" id="1550274at2"/>
<dbReference type="PhylomeDB" id="Q9I485"/>
<dbReference type="BioCyc" id="PAER208964:G1FZ6-1284-MONOMER"/>
<dbReference type="BRENDA" id="4.2.1.171">
    <property type="organism ID" value="5087"/>
</dbReference>
<dbReference type="Proteomes" id="UP000002438">
    <property type="component" value="Chromosome"/>
</dbReference>
<dbReference type="GO" id="GO:0016829">
    <property type="term" value="F:lyase activity"/>
    <property type="evidence" value="ECO:0007669"/>
    <property type="project" value="UniProtKB-KW"/>
</dbReference>
<dbReference type="GO" id="GO:0019470">
    <property type="term" value="P:4-hydroxyproline catabolic process"/>
    <property type="evidence" value="ECO:0000315"/>
    <property type="project" value="PseudoCAP"/>
</dbReference>
<dbReference type="CDD" id="cd01355">
    <property type="entry name" value="AcnX"/>
    <property type="match status" value="1"/>
</dbReference>
<dbReference type="CDD" id="cd01356">
    <property type="entry name" value="AcnX_swivel"/>
    <property type="match status" value="1"/>
</dbReference>
<dbReference type="Gene3D" id="3.30.499.10">
    <property type="entry name" value="Aconitase, domain 3"/>
    <property type="match status" value="1"/>
</dbReference>
<dbReference type="Gene3D" id="3.50.30.10">
    <property type="entry name" value="Phosphohistidine domain"/>
    <property type="match status" value="1"/>
</dbReference>
<dbReference type="InterPro" id="IPR015931">
    <property type="entry name" value="Acnase/IPM_dHydase_lsu_aba_1/3"/>
</dbReference>
<dbReference type="InterPro" id="IPR012047">
    <property type="entry name" value="AcnX"/>
</dbReference>
<dbReference type="InterPro" id="IPR036008">
    <property type="entry name" value="Aconitase_4Fe-4S_dom"/>
</dbReference>
<dbReference type="InterPro" id="IPR007506">
    <property type="entry name" value="PMDh-L-like_dom"/>
</dbReference>
<dbReference type="InterPro" id="IPR002840">
    <property type="entry name" value="PMDh-S-like_dom"/>
</dbReference>
<dbReference type="PANTHER" id="PTHR36577">
    <property type="entry name" value="DUF521 DOMAIN PROTEIN (AFU_ORTHOLOGUE AFUA_6G00490)"/>
    <property type="match status" value="1"/>
</dbReference>
<dbReference type="PANTHER" id="PTHR36577:SF3">
    <property type="entry name" value="DUF521 DOMAIN PROTEIN (AFU_ORTHOLOGUE AFUA_6G00490)"/>
    <property type="match status" value="1"/>
</dbReference>
<dbReference type="Pfam" id="PF04412">
    <property type="entry name" value="AcnX"/>
    <property type="match status" value="1"/>
</dbReference>
<dbReference type="Pfam" id="PF01989">
    <property type="entry name" value="AcnX_swivel_put"/>
    <property type="match status" value="1"/>
</dbReference>
<dbReference type="PIRSF" id="PIRSF036630">
    <property type="entry name" value="UCP036630"/>
    <property type="match status" value="1"/>
</dbReference>
<dbReference type="SUPFAM" id="SSF53732">
    <property type="entry name" value="Aconitase iron-sulfur domain"/>
    <property type="match status" value="1"/>
</dbReference>
<dbReference type="SUPFAM" id="SSF52016">
    <property type="entry name" value="LeuD/IlvD-like"/>
    <property type="match status" value="1"/>
</dbReference>
<organism evidence="6 7">
    <name type="scientific">Pseudomonas aeruginosa (strain ATCC 15692 / DSM 22644 / CIP 104116 / JCM 14847 / LMG 12228 / 1C / PRS 101 / PAO1)</name>
    <dbReference type="NCBI Taxonomy" id="208964"/>
    <lineage>
        <taxon>Bacteria</taxon>
        <taxon>Pseudomonadati</taxon>
        <taxon>Pseudomonadota</taxon>
        <taxon>Gammaproteobacteria</taxon>
        <taxon>Pseudomonadales</taxon>
        <taxon>Pseudomonadaceae</taxon>
        <taxon>Pseudomonas</taxon>
    </lineage>
</organism>
<reference evidence="6 7" key="1">
    <citation type="journal article" date="2000" name="Nature">
        <title>Complete genome sequence of Pseudomonas aeruginosa PAO1, an opportunistic pathogen.</title>
        <authorList>
            <person name="Stover C.K."/>
            <person name="Pham X.-Q.T."/>
            <person name="Erwin A.L."/>
            <person name="Mizoguchi S.D."/>
            <person name="Warrener P."/>
            <person name="Hickey M.J."/>
            <person name="Brinkman F.S.L."/>
            <person name="Hufnagle W.O."/>
            <person name="Kowalik D.J."/>
            <person name="Lagrou M."/>
            <person name="Garber R.L."/>
            <person name="Goltry L."/>
            <person name="Tolentino E."/>
            <person name="Westbrock-Wadman S."/>
            <person name="Yuan Y."/>
            <person name="Brody L.L."/>
            <person name="Coulter S.N."/>
            <person name="Folger K.R."/>
            <person name="Kas A."/>
            <person name="Larbig K."/>
            <person name="Lim R.M."/>
            <person name="Smith K.A."/>
            <person name="Spencer D.H."/>
            <person name="Wong G.K.-S."/>
            <person name="Wu Z."/>
            <person name="Paulsen I.T."/>
            <person name="Reizer J."/>
            <person name="Saier M.H. Jr."/>
            <person name="Hancock R.E.W."/>
            <person name="Lory S."/>
            <person name="Olson M.V."/>
        </authorList>
    </citation>
    <scope>NUCLEOTIDE SEQUENCE [LARGE SCALE GENOMIC DNA]</scope>
    <source>
        <strain evidence="7">ATCC 15692 / DSM 22644 / CIP 104116 / JCM 14847 / LMG 12228 / 1C / PRS 101 / PAO1</strain>
    </source>
</reference>
<reference key="2">
    <citation type="journal article" date="2016" name="Sci. Rep.">
        <title>Functional characterization of aconitase X as a cis-3-hydroxy-L-proline dehydratase.</title>
        <authorList>
            <person name="Watanabe S."/>
            <person name="Tajima K."/>
            <person name="Fujii S."/>
            <person name="Fukumori F."/>
            <person name="Hara R."/>
            <person name="Fukuda R."/>
            <person name="Miyazaki M."/>
            <person name="Kino K."/>
            <person name="Watanabe Y."/>
        </authorList>
    </citation>
    <scope>FUNCTION</scope>
    <scope>CATALYTIC ACTIVITY</scope>
    <scope>SUBSTRATE SPECIFICITY</scope>
    <scope>ACTIVITY REGULATION</scope>
    <scope>BIOPHYSICOCHEMICAL PROPERTIES</scope>
    <scope>SUBUNIT</scope>
    <scope>INDUCTION</scope>
    <scope>ACTIVE SITE</scope>
    <scope>IRON-BINDING</scope>
    <scope>MUTAGENESIS OF ASP-35; SER-66; CYS-67; SER-70; CYS-207; GLU-294; SER-295; SER-303; THR-309; ASN-457; HIS-459; ASP-514; CYS-518; SER-536 AND LYS-538</scope>
    <source>
        <strain evidence="3">ATCC 15692 / DSM 22644 / CIP 104116 / JCM 14847 / LMG 12228 / 1C / PRS 101 / PAO1</strain>
    </source>
</reference>
<gene>
    <name evidence="3" type="primary">lhpI</name>
    <name evidence="3 6" type="ordered locus">PA1259</name>
</gene>
<evidence type="ECO:0000250" key="1">
    <source>
        <dbReference type="UniProtKB" id="A9CH00"/>
    </source>
</evidence>
<evidence type="ECO:0000269" key="2">
    <source>
    </source>
</evidence>
<evidence type="ECO:0000303" key="3">
    <source>
    </source>
</evidence>
<evidence type="ECO:0000305" key="4"/>
<evidence type="ECO:0000305" key="5">
    <source>
    </source>
</evidence>
<evidence type="ECO:0000312" key="6">
    <source>
        <dbReference type="EMBL" id="AAG04648.1"/>
    </source>
</evidence>
<evidence type="ECO:0000312" key="7">
    <source>
        <dbReference type="Proteomes" id="UP000002438"/>
    </source>
</evidence>
<accession>Q9I485</accession>
<sequence>MKHAHLIVPRTLVAGSASGELLYAPTGLSFWGGVDPRSAEVIDRHHPLSGRHLHGRLLAIPGGRGSCTGSSVLLELILGGRAPAAILLREPDEILALGAIVAEELFGRSLPIACLGERFDELAAYPWARLADGRLELHRDAPPPLEARPAEALATDAGPRLDAFDQALLAGEHGEAARLAMRIVLRMAALQGAQRLIDIQRAHIDACIYTGPAGLRFAETLRDLGARVRVPTTLNAISVDQRRWREQGVPAALGEPAAALARAYLDMGAQPSFTCAPYLLDDSARAGEQIVWAESNAVLFANSVLGARTNKYADFMDICCALTGRAPLAGCHLDEQRQARVLIEVEDLGSVDDAFYPTLGYLCGLLCDGQIPAIDGLRQRQPDHDALKAFGAALGTSSSVPMFHVIGVTPEAPDLASAFGGRAPRRTLRVGRERLRDAWRELDSAGETRIDLVALGNPHFSASEFAQLAALCHGRRRHPEVALVITSSRQVVAQAEAAGHLATLQAFGARLVTDTCWCMLDEPLVPPGARTLMTNSAKYAHYAPGLVGRQVRFAGLAGCVEAAVGGRSPAGLPAWLSEDC</sequence>
<name>C3HPD_PSEAE</name>
<keyword id="KW-0408">Iron</keyword>
<keyword id="KW-0456">Lyase</keyword>
<keyword id="KW-1185">Reference proteome</keyword>